<dbReference type="EMBL" id="CP000051">
    <property type="protein sequence ID" value="AAX50337.1"/>
    <property type="molecule type" value="Genomic_DNA"/>
</dbReference>
<dbReference type="RefSeq" id="WP_011324560.1">
    <property type="nucleotide sequence ID" value="NC_007429.1"/>
</dbReference>
<dbReference type="SMR" id="Q3KMT5"/>
<dbReference type="KEGG" id="cta:CTA_0091"/>
<dbReference type="HOGENOM" id="CLU_064548_3_2_0"/>
<dbReference type="Proteomes" id="UP000002532">
    <property type="component" value="Chromosome"/>
</dbReference>
<dbReference type="GO" id="GO:1990904">
    <property type="term" value="C:ribonucleoprotein complex"/>
    <property type="evidence" value="ECO:0007669"/>
    <property type="project" value="UniProtKB-KW"/>
</dbReference>
<dbReference type="GO" id="GO:0005840">
    <property type="term" value="C:ribosome"/>
    <property type="evidence" value="ECO:0007669"/>
    <property type="project" value="UniProtKB-KW"/>
</dbReference>
<dbReference type="GO" id="GO:0003735">
    <property type="term" value="F:structural constituent of ribosome"/>
    <property type="evidence" value="ECO:0007669"/>
    <property type="project" value="InterPro"/>
</dbReference>
<dbReference type="GO" id="GO:0006412">
    <property type="term" value="P:translation"/>
    <property type="evidence" value="ECO:0007669"/>
    <property type="project" value="UniProtKB-UniRule"/>
</dbReference>
<dbReference type="FunFam" id="2.30.170.40:FF:000010">
    <property type="entry name" value="50S ribosomal protein L28"/>
    <property type="match status" value="1"/>
</dbReference>
<dbReference type="Gene3D" id="2.30.170.40">
    <property type="entry name" value="Ribosomal protein L28/L24"/>
    <property type="match status" value="1"/>
</dbReference>
<dbReference type="HAMAP" id="MF_00373">
    <property type="entry name" value="Ribosomal_bL28"/>
    <property type="match status" value="1"/>
</dbReference>
<dbReference type="InterPro" id="IPR026569">
    <property type="entry name" value="Ribosomal_bL28"/>
</dbReference>
<dbReference type="InterPro" id="IPR034704">
    <property type="entry name" value="Ribosomal_bL28/bL31-like_sf"/>
</dbReference>
<dbReference type="InterPro" id="IPR001383">
    <property type="entry name" value="Ribosomal_bL28_bact-type"/>
</dbReference>
<dbReference type="InterPro" id="IPR037147">
    <property type="entry name" value="Ribosomal_bL28_sf"/>
</dbReference>
<dbReference type="NCBIfam" id="TIGR00009">
    <property type="entry name" value="L28"/>
    <property type="match status" value="1"/>
</dbReference>
<dbReference type="PANTHER" id="PTHR13528">
    <property type="entry name" value="39S RIBOSOMAL PROTEIN L28, MITOCHONDRIAL"/>
    <property type="match status" value="1"/>
</dbReference>
<dbReference type="PANTHER" id="PTHR13528:SF2">
    <property type="entry name" value="LARGE RIBOSOMAL SUBUNIT PROTEIN BL28M"/>
    <property type="match status" value="1"/>
</dbReference>
<dbReference type="Pfam" id="PF00830">
    <property type="entry name" value="Ribosomal_L28"/>
    <property type="match status" value="1"/>
</dbReference>
<dbReference type="SUPFAM" id="SSF143800">
    <property type="entry name" value="L28p-like"/>
    <property type="match status" value="1"/>
</dbReference>
<keyword id="KW-0687">Ribonucleoprotein</keyword>
<keyword id="KW-0689">Ribosomal protein</keyword>
<reference key="1">
    <citation type="journal article" date="2005" name="Infect. Immun.">
        <title>Comparative genomic analysis of Chlamydia trachomatis oculotropic and genitotropic strains.</title>
        <authorList>
            <person name="Carlson J.H."/>
            <person name="Porcella S.F."/>
            <person name="McClarty G."/>
            <person name="Caldwell H.D."/>
        </authorList>
    </citation>
    <scope>NUCLEOTIDE SEQUENCE [LARGE SCALE GENOMIC DNA]</scope>
    <source>
        <strain>ATCC VR-571B / DSM 19440 / HAR-13</strain>
    </source>
</reference>
<sequence>MSKKCALTGRKPRRGYSYAIRGISKKKKGIGLKVTGRTKRRFFPNIMTKRLWSTEENRFLKLKISAAALRLVDKLGLDQVVARAKSKGF</sequence>
<evidence type="ECO:0000255" key="1">
    <source>
        <dbReference type="HAMAP-Rule" id="MF_00373"/>
    </source>
</evidence>
<evidence type="ECO:0000305" key="2"/>
<comment type="similarity">
    <text evidence="1">Belongs to the bacterial ribosomal protein bL28 family.</text>
</comment>
<organism>
    <name type="scientific">Chlamydia trachomatis serovar A (strain ATCC VR-571B / DSM 19440 / HAR-13)</name>
    <dbReference type="NCBI Taxonomy" id="315277"/>
    <lineage>
        <taxon>Bacteria</taxon>
        <taxon>Pseudomonadati</taxon>
        <taxon>Chlamydiota</taxon>
        <taxon>Chlamydiia</taxon>
        <taxon>Chlamydiales</taxon>
        <taxon>Chlamydiaceae</taxon>
        <taxon>Chlamydia/Chlamydophila group</taxon>
        <taxon>Chlamydia</taxon>
    </lineage>
</organism>
<feature type="chain" id="PRO_1000007208" description="Large ribosomal subunit protein bL28">
    <location>
        <begin position="1"/>
        <end position="89"/>
    </location>
</feature>
<name>RL28_CHLTA</name>
<accession>Q3KMT5</accession>
<proteinExistence type="inferred from homology"/>
<gene>
    <name evidence="1" type="primary">rpmB</name>
    <name type="ordered locus">CTA_0091</name>
</gene>
<protein>
    <recommendedName>
        <fullName evidence="1">Large ribosomal subunit protein bL28</fullName>
    </recommendedName>
    <alternativeName>
        <fullName evidence="2">50S ribosomal protein L28</fullName>
    </alternativeName>
</protein>